<name>PPK1_ECOL6</name>
<dbReference type="EC" id="2.7.4.1" evidence="2"/>
<dbReference type="EMBL" id="AE014075">
    <property type="protein sequence ID" value="AAN81469.1"/>
    <property type="status" value="ALT_INIT"/>
    <property type="molecule type" value="Genomic_DNA"/>
</dbReference>
<dbReference type="SMR" id="Q8FF70"/>
<dbReference type="STRING" id="199310.c3019"/>
<dbReference type="KEGG" id="ecc:c3019"/>
<dbReference type="eggNOG" id="COG0855">
    <property type="taxonomic scope" value="Bacteria"/>
</dbReference>
<dbReference type="HOGENOM" id="CLU_009678_6_1_6"/>
<dbReference type="Proteomes" id="UP000001410">
    <property type="component" value="Chromosome"/>
</dbReference>
<dbReference type="GO" id="GO:0009358">
    <property type="term" value="C:polyphosphate kinase complex"/>
    <property type="evidence" value="ECO:0007669"/>
    <property type="project" value="InterPro"/>
</dbReference>
<dbReference type="GO" id="GO:0005524">
    <property type="term" value="F:ATP binding"/>
    <property type="evidence" value="ECO:0007669"/>
    <property type="project" value="UniProtKB-KW"/>
</dbReference>
<dbReference type="GO" id="GO:0046872">
    <property type="term" value="F:metal ion binding"/>
    <property type="evidence" value="ECO:0007669"/>
    <property type="project" value="UniProtKB-KW"/>
</dbReference>
<dbReference type="GO" id="GO:0008976">
    <property type="term" value="F:polyphosphate kinase activity"/>
    <property type="evidence" value="ECO:0007669"/>
    <property type="project" value="UniProtKB-UniRule"/>
</dbReference>
<dbReference type="GO" id="GO:0006799">
    <property type="term" value="P:polyphosphate biosynthetic process"/>
    <property type="evidence" value="ECO:0007669"/>
    <property type="project" value="UniProtKB-UniRule"/>
</dbReference>
<dbReference type="CDD" id="cd09167">
    <property type="entry name" value="PLDc_EcPPK1_C2_like"/>
    <property type="match status" value="1"/>
</dbReference>
<dbReference type="CDD" id="cd09114">
    <property type="entry name" value="PLDc_PPK1_C1"/>
    <property type="match status" value="1"/>
</dbReference>
<dbReference type="FunFam" id="1.20.58.310:FF:000001">
    <property type="entry name" value="Polyphosphate kinase"/>
    <property type="match status" value="1"/>
</dbReference>
<dbReference type="FunFam" id="3.30.1840.10:FF:000001">
    <property type="entry name" value="Polyphosphate kinase"/>
    <property type="match status" value="1"/>
</dbReference>
<dbReference type="FunFam" id="3.30.870.10:FF:000001">
    <property type="entry name" value="Polyphosphate kinase"/>
    <property type="match status" value="1"/>
</dbReference>
<dbReference type="FunFam" id="3.30.870.10:FF:000007">
    <property type="entry name" value="Polyphosphate kinase"/>
    <property type="match status" value="1"/>
</dbReference>
<dbReference type="Gene3D" id="3.30.870.10">
    <property type="entry name" value="Endonuclease Chain A"/>
    <property type="match status" value="2"/>
</dbReference>
<dbReference type="Gene3D" id="3.30.1840.10">
    <property type="entry name" value="Polyphosphate kinase middle domain"/>
    <property type="match status" value="1"/>
</dbReference>
<dbReference type="Gene3D" id="1.20.58.310">
    <property type="entry name" value="Polyphosphate kinase N-terminal domain"/>
    <property type="match status" value="1"/>
</dbReference>
<dbReference type="HAMAP" id="MF_00347">
    <property type="entry name" value="Polyphosphate_kinase"/>
    <property type="match status" value="1"/>
</dbReference>
<dbReference type="InterPro" id="IPR001736">
    <property type="entry name" value="PLipase_D/transphosphatidylase"/>
</dbReference>
<dbReference type="InterPro" id="IPR003414">
    <property type="entry name" value="PP_kinase"/>
</dbReference>
<dbReference type="InterPro" id="IPR041108">
    <property type="entry name" value="PP_kinase_C_1"/>
</dbReference>
<dbReference type="InterPro" id="IPR024953">
    <property type="entry name" value="PP_kinase_middle"/>
</dbReference>
<dbReference type="InterPro" id="IPR036830">
    <property type="entry name" value="PP_kinase_middle_dom_sf"/>
</dbReference>
<dbReference type="InterPro" id="IPR025200">
    <property type="entry name" value="PPK_C_dom2"/>
</dbReference>
<dbReference type="InterPro" id="IPR025198">
    <property type="entry name" value="PPK_N_dom"/>
</dbReference>
<dbReference type="InterPro" id="IPR036832">
    <property type="entry name" value="PPK_N_dom_sf"/>
</dbReference>
<dbReference type="NCBIfam" id="TIGR03705">
    <property type="entry name" value="poly_P_kin"/>
    <property type="match status" value="1"/>
</dbReference>
<dbReference type="NCBIfam" id="NF003917">
    <property type="entry name" value="PRK05443.1-1"/>
    <property type="match status" value="1"/>
</dbReference>
<dbReference type="PANTHER" id="PTHR30218">
    <property type="entry name" value="POLYPHOSPHATE KINASE"/>
    <property type="match status" value="1"/>
</dbReference>
<dbReference type="PANTHER" id="PTHR30218:SF0">
    <property type="entry name" value="POLYPHOSPHATE KINASE"/>
    <property type="match status" value="1"/>
</dbReference>
<dbReference type="Pfam" id="PF02503">
    <property type="entry name" value="PP_kinase"/>
    <property type="match status" value="1"/>
</dbReference>
<dbReference type="Pfam" id="PF13090">
    <property type="entry name" value="PP_kinase_C"/>
    <property type="match status" value="1"/>
</dbReference>
<dbReference type="Pfam" id="PF17941">
    <property type="entry name" value="PP_kinase_C_1"/>
    <property type="match status" value="1"/>
</dbReference>
<dbReference type="Pfam" id="PF13089">
    <property type="entry name" value="PP_kinase_N"/>
    <property type="match status" value="1"/>
</dbReference>
<dbReference type="PIRSF" id="PIRSF015589">
    <property type="entry name" value="PP_kinase"/>
    <property type="match status" value="1"/>
</dbReference>
<dbReference type="SUPFAM" id="SSF56024">
    <property type="entry name" value="Phospholipase D/nuclease"/>
    <property type="match status" value="2"/>
</dbReference>
<dbReference type="SUPFAM" id="SSF143724">
    <property type="entry name" value="PHP14-like"/>
    <property type="match status" value="1"/>
</dbReference>
<dbReference type="SUPFAM" id="SSF140356">
    <property type="entry name" value="PPK N-terminal domain-like"/>
    <property type="match status" value="1"/>
</dbReference>
<dbReference type="PROSITE" id="PS50035">
    <property type="entry name" value="PLD"/>
    <property type="match status" value="1"/>
</dbReference>
<evidence type="ECO:0000250" key="1"/>
<evidence type="ECO:0000255" key="2">
    <source>
        <dbReference type="HAMAP-Rule" id="MF_00347"/>
    </source>
</evidence>
<evidence type="ECO:0000305" key="3"/>
<sequence>MGQEKLYIEKELSWLSFNERVLQEAADKSNPLIERMRFLGIYSNNLDEFYKVRFAELKRRIIISEEQGSNSHSRHLLGKIQSRVLKADQEFDGLYNELLLEMARNQIFLINERQLSVNQQNWLRHYFKQYLRQHITPILINPDTDLVQFLKDDYTYLAVEIIRGDTIRYALLEIPSDKVPRFVNLPPEAPRRRKPMILLDNILRYCLDDIFKGFFDYDALNAYSMKMTRDAEYDLVHEMEASLMELMSSSLKQRLTAEPVRFVYQRDMPNALVEVLREKLTISRYDSIVPGGRYHNFKDFINFPNVGKANLVNKPLPRLRHIWFDKAQFRNGFDAIRERDVLLYYPYHTFEHVLELLRQASFDPSVLAIKINIYRVAKDSRIIDSMIHAAHNGKKVTVVVELQARFDEEANIHWAKRLTEAGVHVIFSAPGLKIHAKLFLISRKENGEVVRYAHIGTGNFNEKTARLYTDYSLLTADARITNEVRRVFNFIENPYRPVTFDYLMVSPQNSRRLLYEMVDREIANAQQGLPSGITLKLNNLVDKGLVDRLYAASSSGVPVNLLVRGMCSLIPNLEGISDNIRAISIVDRYLEHDRVYIFENGGDKKVYLSSADWMTRNIDYRIEVATPLLDPRLKQRVLDIIDILFSDTVKARYIDKELSNRYVPRGNRRKVRAQLAIYDYIKSLEQSE</sequence>
<gene>
    <name evidence="2" type="primary">ppk</name>
    <name type="ordered locus">c3019</name>
</gene>
<keyword id="KW-0067">ATP-binding</keyword>
<keyword id="KW-0418">Kinase</keyword>
<keyword id="KW-0460">Magnesium</keyword>
<keyword id="KW-0479">Metal-binding</keyword>
<keyword id="KW-0547">Nucleotide-binding</keyword>
<keyword id="KW-0597">Phosphoprotein</keyword>
<keyword id="KW-1185">Reference proteome</keyword>
<keyword id="KW-0808">Transferase</keyword>
<organism>
    <name type="scientific">Escherichia coli O6:H1 (strain CFT073 / ATCC 700928 / UPEC)</name>
    <dbReference type="NCBI Taxonomy" id="199310"/>
    <lineage>
        <taxon>Bacteria</taxon>
        <taxon>Pseudomonadati</taxon>
        <taxon>Pseudomonadota</taxon>
        <taxon>Gammaproteobacteria</taxon>
        <taxon>Enterobacterales</taxon>
        <taxon>Enterobacteriaceae</taxon>
        <taxon>Escherichia</taxon>
    </lineage>
</organism>
<reference key="1">
    <citation type="journal article" date="2002" name="Proc. Natl. Acad. Sci. U.S.A.">
        <title>Extensive mosaic structure revealed by the complete genome sequence of uropathogenic Escherichia coli.</title>
        <authorList>
            <person name="Welch R.A."/>
            <person name="Burland V."/>
            <person name="Plunkett G. III"/>
            <person name="Redford P."/>
            <person name="Roesch P."/>
            <person name="Rasko D."/>
            <person name="Buckles E.L."/>
            <person name="Liou S.-R."/>
            <person name="Boutin A."/>
            <person name="Hackett J."/>
            <person name="Stroud D."/>
            <person name="Mayhew G.F."/>
            <person name="Rose D.J."/>
            <person name="Zhou S."/>
            <person name="Schwartz D.C."/>
            <person name="Perna N.T."/>
            <person name="Mobley H.L.T."/>
            <person name="Donnenberg M.S."/>
            <person name="Blattner F.R."/>
        </authorList>
    </citation>
    <scope>NUCLEOTIDE SEQUENCE [LARGE SCALE GENOMIC DNA]</scope>
    <source>
        <strain>CFT073 / ATCC 700928 / UPEC</strain>
    </source>
</reference>
<accession>Q8FF70</accession>
<proteinExistence type="inferred from homology"/>
<feature type="initiator methionine" description="Removed" evidence="1">
    <location>
        <position position="1"/>
    </location>
</feature>
<feature type="chain" id="PRO_0000128642" description="Polyphosphate kinase">
    <location>
        <begin position="2"/>
        <end position="688"/>
    </location>
</feature>
<feature type="domain" description="PLD phosphodiesterase" evidence="2">
    <location>
        <begin position="430"/>
        <end position="464"/>
    </location>
</feature>
<feature type="active site" description="Phosphohistidine intermediate" evidence="2">
    <location>
        <position position="435"/>
    </location>
</feature>
<feature type="binding site" evidence="2">
    <location>
        <position position="45"/>
    </location>
    <ligand>
        <name>ATP</name>
        <dbReference type="ChEBI" id="CHEBI:30616"/>
    </ligand>
</feature>
<feature type="binding site" evidence="2">
    <location>
        <position position="375"/>
    </location>
    <ligand>
        <name>Mg(2+)</name>
        <dbReference type="ChEBI" id="CHEBI:18420"/>
    </ligand>
</feature>
<feature type="binding site" evidence="2">
    <location>
        <position position="405"/>
    </location>
    <ligand>
        <name>Mg(2+)</name>
        <dbReference type="ChEBI" id="CHEBI:18420"/>
    </ligand>
</feature>
<feature type="binding site" evidence="2">
    <location>
        <position position="468"/>
    </location>
    <ligand>
        <name>ATP</name>
        <dbReference type="ChEBI" id="CHEBI:30616"/>
    </ligand>
</feature>
<feature type="binding site" evidence="2">
    <location>
        <position position="564"/>
    </location>
    <ligand>
        <name>ATP</name>
        <dbReference type="ChEBI" id="CHEBI:30616"/>
    </ligand>
</feature>
<feature type="binding site" evidence="2">
    <location>
        <position position="592"/>
    </location>
    <ligand>
        <name>ATP</name>
        <dbReference type="ChEBI" id="CHEBI:30616"/>
    </ligand>
</feature>
<protein>
    <recommendedName>
        <fullName evidence="2">Polyphosphate kinase</fullName>
        <ecNumber evidence="2">2.7.4.1</ecNumber>
    </recommendedName>
    <alternativeName>
        <fullName evidence="2">ATP-polyphosphate phosphotransferase</fullName>
    </alternativeName>
    <alternativeName>
        <fullName evidence="2">Polyphosphoric acid kinase</fullName>
    </alternativeName>
</protein>
<comment type="function">
    <text evidence="2">Catalyzes the reversible transfer of the terminal phosphate of ATP to form a long-chain polyphosphate (polyP).</text>
</comment>
<comment type="catalytic activity">
    <reaction evidence="2">
        <text>[phosphate](n) + ATP = [phosphate](n+1) + ADP</text>
        <dbReference type="Rhea" id="RHEA:19573"/>
        <dbReference type="Rhea" id="RHEA-COMP:9859"/>
        <dbReference type="Rhea" id="RHEA-COMP:14280"/>
        <dbReference type="ChEBI" id="CHEBI:16838"/>
        <dbReference type="ChEBI" id="CHEBI:30616"/>
        <dbReference type="ChEBI" id="CHEBI:456216"/>
        <dbReference type="EC" id="2.7.4.1"/>
    </reaction>
</comment>
<comment type="cofactor">
    <cofactor evidence="2">
        <name>Mg(2+)</name>
        <dbReference type="ChEBI" id="CHEBI:18420"/>
    </cofactor>
</comment>
<comment type="PTM">
    <text evidence="2">An intermediate of this reaction is the autophosphorylated ppk in which a phosphate is covalently linked to a histidine residue through a N-P bond.</text>
</comment>
<comment type="similarity">
    <text evidence="2">Belongs to the polyphosphate kinase 1 (PPK1) family.</text>
</comment>
<comment type="sequence caution" evidence="3">
    <conflict type="erroneous initiation">
        <sequence resource="EMBL-CDS" id="AAN81469"/>
    </conflict>
</comment>